<reference key="1">
    <citation type="journal article" date="1996" name="Mol. Gen. Genet.">
        <title>Cloning and sequence comparison of AvaI and BsoBI restriction-modification systems.</title>
        <authorList>
            <person name="Ruan H."/>
            <person name="Lunnen K.D."/>
            <person name="Scott M.E."/>
            <person name="Moran L.S."/>
            <person name="Slatko B.E."/>
            <person name="Pelletier J.J."/>
            <person name="Hess E.J."/>
            <person name="Benner J. II"/>
            <person name="Wilson G.G."/>
            <person name="Xu S.-Y."/>
        </authorList>
    </citation>
    <scope>NUCLEOTIDE SEQUENCE [GENOMIC DNA]</scope>
    <scope>FUNCTION</scope>
    <source>
        <strain>PCC 7118 / ATCC 27892</strain>
    </source>
</reference>
<reference key="2">
    <citation type="journal article" date="2003" name="Nucleic Acids Res.">
        <title>A nomenclature for restriction enzymes, DNA methyltransferases, homing endonucleases and their genes.</title>
        <authorList>
            <person name="Roberts R.J."/>
            <person name="Belfort M."/>
            <person name="Bestor T."/>
            <person name="Bhagwat A.S."/>
            <person name="Bickle T.A."/>
            <person name="Bitinaite J."/>
            <person name="Blumenthal R.M."/>
            <person name="Degtyarev S.K."/>
            <person name="Dryden D.T."/>
            <person name="Dybvig K."/>
            <person name="Firman K."/>
            <person name="Gromova E.S."/>
            <person name="Gumport R.I."/>
            <person name="Halford S.E."/>
            <person name="Hattman S."/>
            <person name="Heitman J."/>
            <person name="Hornby D.P."/>
            <person name="Janulaitis A."/>
            <person name="Jeltsch A."/>
            <person name="Josephsen J."/>
            <person name="Kiss A."/>
            <person name="Klaenhammer T.R."/>
            <person name="Kobayashi I."/>
            <person name="Kong H."/>
            <person name="Krueger D.H."/>
            <person name="Lacks S."/>
            <person name="Marinus M.G."/>
            <person name="Miyahara M."/>
            <person name="Morgan R.D."/>
            <person name="Murray N.E."/>
            <person name="Nagaraja V."/>
            <person name="Piekarowicz A."/>
            <person name="Pingoud A."/>
            <person name="Raleigh E."/>
            <person name="Rao D.N."/>
            <person name="Reich N."/>
            <person name="Repin V.E."/>
            <person name="Selker E.U."/>
            <person name="Shaw P.C."/>
            <person name="Stein D.C."/>
            <person name="Stoddard B.L."/>
            <person name="Szybalski W."/>
            <person name="Trautner T.A."/>
            <person name="Van Etten J.L."/>
            <person name="Vitor J.M."/>
            <person name="Wilson G.G."/>
            <person name="Xu S.Y."/>
        </authorList>
    </citation>
    <scope>NOMENCLATURE</scope>
    <scope>SUBTYPE</scope>
</reference>
<protein>
    <recommendedName>
        <fullName evidence="1">Type II restriction enzyme AvaI</fullName>
        <shortName>R.AvaI</shortName>
        <ecNumber>3.1.21.4</ecNumber>
    </recommendedName>
    <alternativeName>
        <fullName>Endonuclease AvaI</fullName>
    </alternativeName>
    <alternativeName>
        <fullName>Type-2 restriction enzyme AvaI</fullName>
    </alternativeName>
</protein>
<sequence length="315" mass="35679">MPYQYHIQSNDDLVTPYQEVRAGFVALALERNRKATPFVEQARALKIRVSQIERPQDLLQMRDIRPTLLAASGVSDKAAGHLQEQDKVDAIEGLIQNFLEPAGENFVEELVYRFLLTRGDTLGGSMRNVGGILAERKFARYIISALTLSNTSYKWLDKNSKTWLNQPDDDTDIELRLRGLSWNLEGRNRTFIYNVNVPIVRKNIDICLFDCRQNEIEKNIISNPNIYIALGELKGGIDPAGADEHWKTANSALARIRTAFDRHSLKPYTFFVGSAIEKSMAEEIWHQLNSGILTNAANLTQPDQVASLCAWFIQL</sequence>
<evidence type="ECO:0000303" key="1">
    <source>
    </source>
</evidence>
<evidence type="ECO:0000303" key="2">
    <source>
    </source>
</evidence>
<evidence type="ECO:0000305" key="3">
    <source>
    </source>
</evidence>
<proteinExistence type="predicted"/>
<gene>
    <name evidence="2" type="primary">avaIR</name>
</gene>
<name>T2A1_ANAVA</name>
<feature type="chain" id="PRO_0000077280" description="Type II restriction enzyme AvaI">
    <location>
        <begin position="1"/>
        <end position="315"/>
    </location>
</feature>
<dbReference type="EC" id="3.1.21.4"/>
<dbReference type="EMBL" id="X98339">
    <property type="protein sequence ID" value="CAA66985.1"/>
    <property type="molecule type" value="Genomic_DNA"/>
</dbReference>
<dbReference type="PIR" id="S72472">
    <property type="entry name" value="S72472"/>
</dbReference>
<dbReference type="SMR" id="P0A458"/>
<dbReference type="PRO" id="PR:P0A458"/>
<dbReference type="GO" id="GO:0003677">
    <property type="term" value="F:DNA binding"/>
    <property type="evidence" value="ECO:0007669"/>
    <property type="project" value="InterPro"/>
</dbReference>
<dbReference type="GO" id="GO:0009036">
    <property type="term" value="F:type II site-specific deoxyribonuclease activity"/>
    <property type="evidence" value="ECO:0007669"/>
    <property type="project" value="UniProtKB-EC"/>
</dbReference>
<dbReference type="GO" id="GO:0009307">
    <property type="term" value="P:DNA restriction-modification system"/>
    <property type="evidence" value="ECO:0007669"/>
    <property type="project" value="UniProtKB-KW"/>
</dbReference>
<dbReference type="CDD" id="cd22315">
    <property type="entry name" value="BsoBI-like"/>
    <property type="match status" value="1"/>
</dbReference>
<dbReference type="Gene3D" id="3.40.91.10">
    <property type="match status" value="1"/>
</dbReference>
<dbReference type="Gene3D" id="1.10.238.90">
    <property type="entry name" value="Restriction endonuclease BsobI, helical domain"/>
    <property type="match status" value="1"/>
</dbReference>
<dbReference type="InterPro" id="IPR043091">
    <property type="entry name" value="Restr_endonucII_AvaI/BsoBI_hel"/>
</dbReference>
<dbReference type="InterPro" id="IPR011335">
    <property type="entry name" value="Restrct_endonuc-II-like"/>
</dbReference>
<dbReference type="InterPro" id="IPR015277">
    <property type="entry name" value="Restrct_endonuc_II_AvaI/BsoBI"/>
</dbReference>
<dbReference type="Pfam" id="PF09194">
    <property type="entry name" value="Endonuc-BsobI"/>
    <property type="match status" value="1"/>
</dbReference>
<dbReference type="SUPFAM" id="SSF52980">
    <property type="entry name" value="Restriction endonuclease-like"/>
    <property type="match status" value="1"/>
</dbReference>
<comment type="function">
    <text evidence="1 3">A P subtype restriction enzyme that recognizes the double-stranded sequence 5'-CYCGRG-3' and cleaves after C-1.</text>
</comment>
<comment type="catalytic activity">
    <reaction>
        <text>Endonucleolytic cleavage of DNA to give specific double-stranded fragments with terminal 5'-phosphates.</text>
        <dbReference type="EC" id="3.1.21.4"/>
    </reaction>
</comment>
<accession>P0A458</accession>
<accession>P70803</accession>
<keyword id="KW-0255">Endonuclease</keyword>
<keyword id="KW-0378">Hydrolase</keyword>
<keyword id="KW-0540">Nuclease</keyword>
<keyword id="KW-0680">Restriction system</keyword>
<organism>
    <name type="scientific">Anabaena variabilis</name>
    <dbReference type="NCBI Taxonomy" id="264691"/>
    <lineage>
        <taxon>Bacteria</taxon>
        <taxon>Bacillati</taxon>
        <taxon>Cyanobacteriota</taxon>
        <taxon>Cyanophyceae</taxon>
        <taxon>Nostocales</taxon>
        <taxon>Nostocaceae</taxon>
        <taxon>Trichormus</taxon>
    </lineage>
</organism>